<comment type="function">
    <text evidence="1">Forms part of the ribosomal stalk which helps the ribosome interact with GTP-bound translation factors.</text>
</comment>
<comment type="subunit">
    <text evidence="1">Part of the ribosomal stalk of the 50S ribosomal subunit. Interacts with L10 and the large rRNA to form the base of the stalk. L10 forms an elongated spine to which L12 dimers bind in a sequential fashion forming a multimeric L10(L12)X complex.</text>
</comment>
<comment type="PTM">
    <text evidence="1">One or more lysine residues are methylated.</text>
</comment>
<comment type="similarity">
    <text evidence="1">Belongs to the universal ribosomal protein uL11 family.</text>
</comment>
<gene>
    <name evidence="1" type="primary">rplK</name>
    <name type="ordered locus">FTM_0205</name>
</gene>
<keyword id="KW-0488">Methylation</keyword>
<keyword id="KW-0687">Ribonucleoprotein</keyword>
<keyword id="KW-0689">Ribosomal protein</keyword>
<keyword id="KW-0694">RNA-binding</keyword>
<keyword id="KW-0699">rRNA-binding</keyword>
<sequence length="144" mass="15256">MAKKKIEAIIKLQVAAGKANPSPPIGPALGQHGVNIMGFCKEFNAKTQGMEPGMPIPVEISVYSDRSFTFEMKTPPASYLIKKAINVKSGSSKPSKEFVGTITRAQLEEIAKVKDPDLTAADLDAAVRIIAGSARSMGVKVEGV</sequence>
<feature type="chain" id="PRO_1000195641" description="Large ribosomal subunit protein uL11">
    <location>
        <begin position="1"/>
        <end position="144"/>
    </location>
</feature>
<organism>
    <name type="scientific">Francisella tularensis subsp. mediasiatica (strain FSC147)</name>
    <dbReference type="NCBI Taxonomy" id="441952"/>
    <lineage>
        <taxon>Bacteria</taxon>
        <taxon>Pseudomonadati</taxon>
        <taxon>Pseudomonadota</taxon>
        <taxon>Gammaproteobacteria</taxon>
        <taxon>Thiotrichales</taxon>
        <taxon>Francisellaceae</taxon>
        <taxon>Francisella</taxon>
    </lineage>
</organism>
<proteinExistence type="inferred from homology"/>
<reference key="1">
    <citation type="journal article" date="2009" name="PLoS Pathog.">
        <title>Molecular evolutionary consequences of niche restriction in Francisella tularensis, a facultative intracellular pathogen.</title>
        <authorList>
            <person name="Larsson P."/>
            <person name="Elfsmark D."/>
            <person name="Svensson K."/>
            <person name="Wikstroem P."/>
            <person name="Forsman M."/>
            <person name="Brettin T."/>
            <person name="Keim P."/>
            <person name="Johansson A."/>
        </authorList>
    </citation>
    <scope>NUCLEOTIDE SEQUENCE [LARGE SCALE GENOMIC DNA]</scope>
    <source>
        <strain>FSC147</strain>
    </source>
</reference>
<evidence type="ECO:0000255" key="1">
    <source>
        <dbReference type="HAMAP-Rule" id="MF_00736"/>
    </source>
</evidence>
<evidence type="ECO:0000305" key="2"/>
<accession>B2SFD2</accession>
<dbReference type="EMBL" id="CP000915">
    <property type="protein sequence ID" value="ACD30285.1"/>
    <property type="molecule type" value="Genomic_DNA"/>
</dbReference>
<dbReference type="SMR" id="B2SFD2"/>
<dbReference type="KEGG" id="ftm:FTM_0205"/>
<dbReference type="HOGENOM" id="CLU_074237_2_0_6"/>
<dbReference type="GO" id="GO:0022625">
    <property type="term" value="C:cytosolic large ribosomal subunit"/>
    <property type="evidence" value="ECO:0007669"/>
    <property type="project" value="TreeGrafter"/>
</dbReference>
<dbReference type="GO" id="GO:0070180">
    <property type="term" value="F:large ribosomal subunit rRNA binding"/>
    <property type="evidence" value="ECO:0007669"/>
    <property type="project" value="UniProtKB-UniRule"/>
</dbReference>
<dbReference type="GO" id="GO:0003735">
    <property type="term" value="F:structural constituent of ribosome"/>
    <property type="evidence" value="ECO:0007669"/>
    <property type="project" value="InterPro"/>
</dbReference>
<dbReference type="GO" id="GO:0006412">
    <property type="term" value="P:translation"/>
    <property type="evidence" value="ECO:0007669"/>
    <property type="project" value="UniProtKB-UniRule"/>
</dbReference>
<dbReference type="CDD" id="cd00349">
    <property type="entry name" value="Ribosomal_L11"/>
    <property type="match status" value="1"/>
</dbReference>
<dbReference type="FunFam" id="1.10.10.250:FF:000001">
    <property type="entry name" value="50S ribosomal protein L11"/>
    <property type="match status" value="1"/>
</dbReference>
<dbReference type="FunFam" id="3.30.1550.10:FF:000001">
    <property type="entry name" value="50S ribosomal protein L11"/>
    <property type="match status" value="1"/>
</dbReference>
<dbReference type="Gene3D" id="1.10.10.250">
    <property type="entry name" value="Ribosomal protein L11, C-terminal domain"/>
    <property type="match status" value="1"/>
</dbReference>
<dbReference type="Gene3D" id="3.30.1550.10">
    <property type="entry name" value="Ribosomal protein L11/L12, N-terminal domain"/>
    <property type="match status" value="1"/>
</dbReference>
<dbReference type="HAMAP" id="MF_00736">
    <property type="entry name" value="Ribosomal_uL11"/>
    <property type="match status" value="1"/>
</dbReference>
<dbReference type="InterPro" id="IPR000911">
    <property type="entry name" value="Ribosomal_uL11"/>
</dbReference>
<dbReference type="InterPro" id="IPR006519">
    <property type="entry name" value="Ribosomal_uL11_bac-typ"/>
</dbReference>
<dbReference type="InterPro" id="IPR020783">
    <property type="entry name" value="Ribosomal_uL11_C"/>
</dbReference>
<dbReference type="InterPro" id="IPR036769">
    <property type="entry name" value="Ribosomal_uL11_C_sf"/>
</dbReference>
<dbReference type="InterPro" id="IPR020785">
    <property type="entry name" value="Ribosomal_uL11_CS"/>
</dbReference>
<dbReference type="InterPro" id="IPR020784">
    <property type="entry name" value="Ribosomal_uL11_N"/>
</dbReference>
<dbReference type="InterPro" id="IPR036796">
    <property type="entry name" value="Ribosomal_uL11_N_sf"/>
</dbReference>
<dbReference type="NCBIfam" id="TIGR01632">
    <property type="entry name" value="L11_bact"/>
    <property type="match status" value="1"/>
</dbReference>
<dbReference type="PANTHER" id="PTHR11661">
    <property type="entry name" value="60S RIBOSOMAL PROTEIN L12"/>
    <property type="match status" value="1"/>
</dbReference>
<dbReference type="PANTHER" id="PTHR11661:SF1">
    <property type="entry name" value="LARGE RIBOSOMAL SUBUNIT PROTEIN UL11M"/>
    <property type="match status" value="1"/>
</dbReference>
<dbReference type="Pfam" id="PF00298">
    <property type="entry name" value="Ribosomal_L11"/>
    <property type="match status" value="1"/>
</dbReference>
<dbReference type="Pfam" id="PF03946">
    <property type="entry name" value="Ribosomal_L11_N"/>
    <property type="match status" value="1"/>
</dbReference>
<dbReference type="SMART" id="SM00649">
    <property type="entry name" value="RL11"/>
    <property type="match status" value="1"/>
</dbReference>
<dbReference type="SUPFAM" id="SSF54747">
    <property type="entry name" value="Ribosomal L11/L12e N-terminal domain"/>
    <property type="match status" value="1"/>
</dbReference>
<dbReference type="SUPFAM" id="SSF46906">
    <property type="entry name" value="Ribosomal protein L11, C-terminal domain"/>
    <property type="match status" value="1"/>
</dbReference>
<dbReference type="PROSITE" id="PS00359">
    <property type="entry name" value="RIBOSOMAL_L11"/>
    <property type="match status" value="1"/>
</dbReference>
<protein>
    <recommendedName>
        <fullName evidence="1">Large ribosomal subunit protein uL11</fullName>
    </recommendedName>
    <alternativeName>
        <fullName evidence="2">50S ribosomal protein L11</fullName>
    </alternativeName>
</protein>
<name>RL11_FRATM</name>